<organism>
    <name type="scientific">Glycine max</name>
    <name type="common">Soybean</name>
    <name type="synonym">Glycine hispida</name>
    <dbReference type="NCBI Taxonomy" id="3847"/>
    <lineage>
        <taxon>Eukaryota</taxon>
        <taxon>Viridiplantae</taxon>
        <taxon>Streptophyta</taxon>
        <taxon>Embryophyta</taxon>
        <taxon>Tracheophyta</taxon>
        <taxon>Spermatophyta</taxon>
        <taxon>Magnoliopsida</taxon>
        <taxon>eudicotyledons</taxon>
        <taxon>Gunneridae</taxon>
        <taxon>Pentapetalae</taxon>
        <taxon>rosids</taxon>
        <taxon>fabids</taxon>
        <taxon>Fabales</taxon>
        <taxon>Fabaceae</taxon>
        <taxon>Papilionoideae</taxon>
        <taxon>50 kb inversion clade</taxon>
        <taxon>NPAAA clade</taxon>
        <taxon>indigoferoid/millettioid clade</taxon>
        <taxon>Phaseoleae</taxon>
        <taxon>Glycine</taxon>
        <taxon>Glycine subgen. Soja</taxon>
    </lineage>
</organism>
<sequence length="159" mass="17879">MDFRVMGLESPLFHTLQHMMDMSEDGAGDNKTHNAPTWSYVRDAKAMAATPADVKEYPNSYVFEIDMPGLKSGDIKVQVEDDNLLLICGERKRDEEKEGAKYLRMERRVGKLMRKFVLPENANTDAISAVCQDGVLSVTVQKLPPPEPKKPRTIQVKVA</sequence>
<keyword id="KW-0963">Cytoplasm</keyword>
<keyword id="KW-1185">Reference proteome</keyword>
<keyword id="KW-0346">Stress response</keyword>
<gene>
    <name type="primary">HSP17.9-D</name>
</gene>
<reference key="1">
    <citation type="journal article" date="1988" name="J. Mol. Biol.">
        <title>Nucleotide sequence analysis of soybean small heat shock protein genes belonging to two different multigene families.</title>
        <authorList>
            <person name="Raschke E."/>
            <person name="Baumann G."/>
            <person name="Schoeffl F."/>
        </authorList>
    </citation>
    <scope>NUCLEOTIDE SEQUENCE [GENOMIC DNA]</scope>
    <source>
        <strain>cv. Corsoy</strain>
    </source>
</reference>
<evidence type="ECO:0000255" key="1">
    <source>
        <dbReference type="PROSITE-ProRule" id="PRU00285"/>
    </source>
</evidence>
<dbReference type="EMBL" id="X07159">
    <property type="protein sequence ID" value="CAA30153.1"/>
    <property type="molecule type" value="Genomic_DNA"/>
</dbReference>
<dbReference type="PIR" id="S01859">
    <property type="entry name" value="S01859"/>
</dbReference>
<dbReference type="RefSeq" id="NP_001341751.1">
    <property type="nucleotide sequence ID" value="NM_001354822.1"/>
</dbReference>
<dbReference type="RefSeq" id="XP_003550253.1">
    <property type="nucleotide sequence ID" value="XM_003550205.3"/>
</dbReference>
<dbReference type="SMR" id="P05477"/>
<dbReference type="FunCoup" id="P05477">
    <property type="interactions" value="279"/>
</dbReference>
<dbReference type="STRING" id="3847.P05477"/>
<dbReference type="PaxDb" id="3847-GLYMA17G34220.1"/>
<dbReference type="EnsemblPlants" id="KRH05398">
    <property type="protein sequence ID" value="KRH05398"/>
    <property type="gene ID" value="GLYMA_17G224900"/>
</dbReference>
<dbReference type="GeneID" id="100813195"/>
<dbReference type="Gramene" id="KRH05398">
    <property type="protein sequence ID" value="KRH05398"/>
    <property type="gene ID" value="GLYMA_17G224900"/>
</dbReference>
<dbReference type="eggNOG" id="KOG0710">
    <property type="taxonomic scope" value="Eukaryota"/>
</dbReference>
<dbReference type="HOGENOM" id="CLU_046737_5_1_1"/>
<dbReference type="InParanoid" id="P05477"/>
<dbReference type="OMA" id="THNAPTW"/>
<dbReference type="OrthoDB" id="1431247at2759"/>
<dbReference type="Proteomes" id="UP000008827">
    <property type="component" value="Chromosome 17"/>
</dbReference>
<dbReference type="GO" id="GO:0005737">
    <property type="term" value="C:cytoplasm"/>
    <property type="evidence" value="ECO:0007669"/>
    <property type="project" value="UniProtKB-SubCell"/>
</dbReference>
<dbReference type="GO" id="GO:0051082">
    <property type="term" value="F:unfolded protein binding"/>
    <property type="evidence" value="ECO:0000318"/>
    <property type="project" value="GO_Central"/>
</dbReference>
<dbReference type="GO" id="GO:0051259">
    <property type="term" value="P:protein complex oligomerization"/>
    <property type="evidence" value="ECO:0000318"/>
    <property type="project" value="GO_Central"/>
</dbReference>
<dbReference type="GO" id="GO:0006457">
    <property type="term" value="P:protein folding"/>
    <property type="evidence" value="ECO:0000318"/>
    <property type="project" value="GO_Central"/>
</dbReference>
<dbReference type="GO" id="GO:0009408">
    <property type="term" value="P:response to heat"/>
    <property type="evidence" value="ECO:0000318"/>
    <property type="project" value="GO_Central"/>
</dbReference>
<dbReference type="GO" id="GO:0042542">
    <property type="term" value="P:response to hydrogen peroxide"/>
    <property type="evidence" value="ECO:0000318"/>
    <property type="project" value="GO_Central"/>
</dbReference>
<dbReference type="GO" id="GO:0009651">
    <property type="term" value="P:response to salt stress"/>
    <property type="evidence" value="ECO:0000318"/>
    <property type="project" value="GO_Central"/>
</dbReference>
<dbReference type="FunFam" id="2.60.40.790:FF:000010">
    <property type="entry name" value="17.3 kDa class II heat shock protein-like"/>
    <property type="match status" value="1"/>
</dbReference>
<dbReference type="Gene3D" id="2.60.40.790">
    <property type="match status" value="1"/>
</dbReference>
<dbReference type="InterPro" id="IPR002068">
    <property type="entry name" value="A-crystallin/Hsp20_dom"/>
</dbReference>
<dbReference type="InterPro" id="IPR008978">
    <property type="entry name" value="HSP20-like_chaperone"/>
</dbReference>
<dbReference type="InterPro" id="IPR031107">
    <property type="entry name" value="Small_HSP"/>
</dbReference>
<dbReference type="PANTHER" id="PTHR11527">
    <property type="entry name" value="HEAT-SHOCK PROTEIN 20 FAMILY MEMBER"/>
    <property type="match status" value="1"/>
</dbReference>
<dbReference type="Pfam" id="PF00011">
    <property type="entry name" value="HSP20"/>
    <property type="match status" value="1"/>
</dbReference>
<dbReference type="SUPFAM" id="SSF49764">
    <property type="entry name" value="HSP20-like chaperones"/>
    <property type="match status" value="1"/>
</dbReference>
<dbReference type="PROSITE" id="PS01031">
    <property type="entry name" value="SHSP"/>
    <property type="match status" value="1"/>
</dbReference>
<comment type="subcellular location">
    <subcellularLocation>
        <location>Cytoplasm</location>
    </subcellularLocation>
</comment>
<comment type="similarity">
    <text evidence="1">Belongs to the small heat shock protein (HSP20) family.</text>
</comment>
<name>HSP21_SOYBN</name>
<protein>
    <recommendedName>
        <fullName>17.9 kDa class II heat shock protein</fullName>
    </recommendedName>
</protein>
<accession>P05477</accession>
<proteinExistence type="inferred from homology"/>
<feature type="chain" id="PRO_0000125999" description="17.9 kDa class II heat shock protein">
    <location>
        <begin position="1"/>
        <end position="159"/>
    </location>
</feature>
<feature type="domain" description="sHSP" evidence="1">
    <location>
        <begin position="43"/>
        <end position="157"/>
    </location>
</feature>